<protein>
    <recommendedName>
        <fullName>Putative ABC transporter ATP-binding protein CTC_00753</fullName>
        <ecNumber>7.-.-.-</ecNumber>
    </recommendedName>
</protein>
<keyword id="KW-0067">ATP-binding</keyword>
<keyword id="KW-1003">Cell membrane</keyword>
<keyword id="KW-0472">Membrane</keyword>
<keyword id="KW-0547">Nucleotide-binding</keyword>
<keyword id="KW-1185">Reference proteome</keyword>
<keyword id="KW-0677">Repeat</keyword>
<keyword id="KW-1278">Translocase</keyword>
<keyword id="KW-0813">Transport</keyword>
<feature type="chain" id="PRO_0000092004" description="Putative ABC transporter ATP-binding protein CTC_00753">
    <location>
        <begin position="1"/>
        <end position="437"/>
    </location>
</feature>
<feature type="domain" description="ABC transporter 1" evidence="2">
    <location>
        <begin position="1"/>
        <end position="143"/>
    </location>
</feature>
<feature type="domain" description="ABC transporter 2" evidence="2">
    <location>
        <begin position="179"/>
        <end position="416"/>
    </location>
</feature>
<feature type="binding site" evidence="2">
    <location>
        <begin position="219"/>
        <end position="226"/>
    </location>
    <ligand>
        <name>ATP</name>
        <dbReference type="ChEBI" id="CHEBI:30616"/>
    </ligand>
</feature>
<reference key="1">
    <citation type="journal article" date="2003" name="Proc. Natl. Acad. Sci. U.S.A.">
        <title>The genome sequence of Clostridium tetani, the causative agent of tetanus disease.</title>
        <authorList>
            <person name="Brueggemann H."/>
            <person name="Baeumer S."/>
            <person name="Fricke W.F."/>
            <person name="Wiezer A."/>
            <person name="Liesegang H."/>
            <person name="Decker I."/>
            <person name="Herzberg C."/>
            <person name="Martinez-Arias R."/>
            <person name="Merkl R."/>
            <person name="Henne A."/>
            <person name="Gottschalk G."/>
        </authorList>
    </citation>
    <scope>NUCLEOTIDE SEQUENCE [LARGE SCALE GENOMIC DNA]</scope>
    <source>
        <strain>Massachusetts / E88</strain>
    </source>
</reference>
<evidence type="ECO:0000250" key="1"/>
<evidence type="ECO:0000255" key="2">
    <source>
        <dbReference type="PROSITE-ProRule" id="PRU00434"/>
    </source>
</evidence>
<evidence type="ECO:0000305" key="3"/>
<sequence>MEREIAFGLENFNTDINTMKRNVSEVISLLGLNKIRDKQTTEISGGEKQRVAIASVVSMDPQIIAFDEPISQLDPISAEEVLNSIKRLNRDLGKTIILVEQRLDKCFHMADRIIFMENGEIIGQGTPKNIPENIVNKYHLPTITYIFKEAGLQTLPITVKEGRDIIRNNKFQDLKEDDLKFKEVVMEIEKLNFEYERGYKILKDLSFKLHRGEIMTVMGENGAGKSTLFKIIAGMIDKYKGKVLIDNKNIKSLKLKERIKKIGYLSQNPNDYFGRKTVFEEVGYTLKNIGEYKEEKVEQVMKLLNISYLEDKNPRDLSGGEKQRVAIACTIITDPEILILDEPTRGMDAEAKENLGEIIKTLAEVGKSIVVITHDSDFAGDYSHSVMLMFNGEIVAKGCARDILYNSMYYSPQISKIFKNKCNIISSKRAIELLKVI</sequence>
<dbReference type="EC" id="7.-.-.-"/>
<dbReference type="EMBL" id="AE015927">
    <property type="protein sequence ID" value="AAO35354.1"/>
    <property type="molecule type" value="Genomic_DNA"/>
</dbReference>
<dbReference type="RefSeq" id="WP_011099020.1">
    <property type="nucleotide sequence ID" value="NC_004557.1"/>
</dbReference>
<dbReference type="SMR" id="Q897I2"/>
<dbReference type="STRING" id="212717.CTC_00753"/>
<dbReference type="GeneID" id="79382528"/>
<dbReference type="KEGG" id="ctc:CTC_00753"/>
<dbReference type="HOGENOM" id="CLU_000604_86_7_9"/>
<dbReference type="OrthoDB" id="501320at2"/>
<dbReference type="Proteomes" id="UP000001412">
    <property type="component" value="Chromosome"/>
</dbReference>
<dbReference type="GO" id="GO:0043190">
    <property type="term" value="C:ATP-binding cassette (ABC) transporter complex"/>
    <property type="evidence" value="ECO:0007669"/>
    <property type="project" value="TreeGrafter"/>
</dbReference>
<dbReference type="GO" id="GO:0005524">
    <property type="term" value="F:ATP binding"/>
    <property type="evidence" value="ECO:0007669"/>
    <property type="project" value="UniProtKB-KW"/>
</dbReference>
<dbReference type="GO" id="GO:0016887">
    <property type="term" value="F:ATP hydrolysis activity"/>
    <property type="evidence" value="ECO:0007669"/>
    <property type="project" value="InterPro"/>
</dbReference>
<dbReference type="GO" id="GO:0042626">
    <property type="term" value="F:ATPase-coupled transmembrane transporter activity"/>
    <property type="evidence" value="ECO:0007669"/>
    <property type="project" value="TreeGrafter"/>
</dbReference>
<dbReference type="CDD" id="cd03225">
    <property type="entry name" value="ABC_cobalt_CbiO_domain1"/>
    <property type="match status" value="1"/>
</dbReference>
<dbReference type="CDD" id="cd03226">
    <property type="entry name" value="ABC_cobalt_CbiO_domain2"/>
    <property type="match status" value="1"/>
</dbReference>
<dbReference type="Gene3D" id="3.40.50.300">
    <property type="entry name" value="P-loop containing nucleotide triphosphate hydrolases"/>
    <property type="match status" value="2"/>
</dbReference>
<dbReference type="InterPro" id="IPR003593">
    <property type="entry name" value="AAA+_ATPase"/>
</dbReference>
<dbReference type="InterPro" id="IPR003439">
    <property type="entry name" value="ABC_transporter-like_ATP-bd"/>
</dbReference>
<dbReference type="InterPro" id="IPR017871">
    <property type="entry name" value="ABC_transporter-like_CS"/>
</dbReference>
<dbReference type="InterPro" id="IPR015856">
    <property type="entry name" value="ABC_transpr_CbiO/EcfA_su"/>
</dbReference>
<dbReference type="InterPro" id="IPR050095">
    <property type="entry name" value="ECF_ABC_transporter_ATP-bd"/>
</dbReference>
<dbReference type="InterPro" id="IPR027417">
    <property type="entry name" value="P-loop_NTPase"/>
</dbReference>
<dbReference type="PANTHER" id="PTHR43553">
    <property type="entry name" value="HEAVY METAL TRANSPORTER"/>
    <property type="match status" value="1"/>
</dbReference>
<dbReference type="Pfam" id="PF00005">
    <property type="entry name" value="ABC_tran"/>
    <property type="match status" value="2"/>
</dbReference>
<dbReference type="SMART" id="SM00382">
    <property type="entry name" value="AAA"/>
    <property type="match status" value="1"/>
</dbReference>
<dbReference type="SUPFAM" id="SSF52540">
    <property type="entry name" value="P-loop containing nucleoside triphosphate hydrolases"/>
    <property type="match status" value="2"/>
</dbReference>
<dbReference type="PROSITE" id="PS00211">
    <property type="entry name" value="ABC_TRANSPORTER_1"/>
    <property type="match status" value="2"/>
</dbReference>
<dbReference type="PROSITE" id="PS50893">
    <property type="entry name" value="ABC_TRANSPORTER_2"/>
    <property type="match status" value="1"/>
</dbReference>
<accession>Q897I2</accession>
<proteinExistence type="inferred from homology"/>
<organism>
    <name type="scientific">Clostridium tetani (strain Massachusetts / E88)</name>
    <dbReference type="NCBI Taxonomy" id="212717"/>
    <lineage>
        <taxon>Bacteria</taxon>
        <taxon>Bacillati</taxon>
        <taxon>Bacillota</taxon>
        <taxon>Clostridia</taxon>
        <taxon>Eubacteriales</taxon>
        <taxon>Clostridiaceae</taxon>
        <taxon>Clostridium</taxon>
    </lineage>
</organism>
<comment type="function">
    <text evidence="1">Probably part of an ABC transporter complex. Responsible for energy coupling to the transport system (By similarity).</text>
</comment>
<comment type="subcellular location">
    <subcellularLocation>
        <location evidence="1">Cell membrane</location>
        <topology evidence="1">Peripheral membrane protein</topology>
    </subcellularLocation>
</comment>
<comment type="similarity">
    <text evidence="3">Belongs to the ABC transporter superfamily.</text>
</comment>
<gene>
    <name type="ordered locus">CTC_00753</name>
</gene>
<name>Y753_CLOTE</name>